<comment type="function">
    <text evidence="1">Catalyzes the condensation of carbamoyl phosphate and aspartate to form carbamoyl aspartate and inorganic phosphate, the committed step in the de novo pyrimidine nucleotide biosynthesis pathway.</text>
</comment>
<comment type="catalytic activity">
    <reaction evidence="1">
        <text>carbamoyl phosphate + L-aspartate = N-carbamoyl-L-aspartate + phosphate + H(+)</text>
        <dbReference type="Rhea" id="RHEA:20013"/>
        <dbReference type="ChEBI" id="CHEBI:15378"/>
        <dbReference type="ChEBI" id="CHEBI:29991"/>
        <dbReference type="ChEBI" id="CHEBI:32814"/>
        <dbReference type="ChEBI" id="CHEBI:43474"/>
        <dbReference type="ChEBI" id="CHEBI:58228"/>
        <dbReference type="EC" id="2.1.3.2"/>
    </reaction>
</comment>
<comment type="pathway">
    <text evidence="1">Pyrimidine metabolism; UMP biosynthesis via de novo pathway; (S)-dihydroorotate from bicarbonate: step 2/3.</text>
</comment>
<comment type="subunit">
    <text evidence="1">Heterododecamer (2C3:3R2) of six catalytic PyrB chains organized as two trimers (C3), and six regulatory PyrI chains organized as three dimers (R2).</text>
</comment>
<comment type="similarity">
    <text evidence="1">Belongs to the aspartate/ornithine carbamoyltransferase superfamily. ATCase family.</text>
</comment>
<proteinExistence type="inferred from homology"/>
<evidence type="ECO:0000255" key="1">
    <source>
        <dbReference type="HAMAP-Rule" id="MF_00001"/>
    </source>
</evidence>
<dbReference type="EC" id="2.1.3.2" evidence="1"/>
<dbReference type="EMBL" id="CP000802">
    <property type="protein sequence ID" value="ABV08657.1"/>
    <property type="molecule type" value="Genomic_DNA"/>
</dbReference>
<dbReference type="RefSeq" id="WP_000013046.1">
    <property type="nucleotide sequence ID" value="NC_009800.1"/>
</dbReference>
<dbReference type="BMRB" id="A8A803"/>
<dbReference type="SMR" id="A8A803"/>
<dbReference type="GeneID" id="93777579"/>
<dbReference type="KEGG" id="ecx:EcHS_A4501"/>
<dbReference type="HOGENOM" id="CLU_043846_1_2_6"/>
<dbReference type="UniPathway" id="UPA00070">
    <property type="reaction ID" value="UER00116"/>
</dbReference>
<dbReference type="GO" id="GO:0005829">
    <property type="term" value="C:cytosol"/>
    <property type="evidence" value="ECO:0007669"/>
    <property type="project" value="TreeGrafter"/>
</dbReference>
<dbReference type="GO" id="GO:0016597">
    <property type="term" value="F:amino acid binding"/>
    <property type="evidence" value="ECO:0007669"/>
    <property type="project" value="InterPro"/>
</dbReference>
<dbReference type="GO" id="GO:0004070">
    <property type="term" value="F:aspartate carbamoyltransferase activity"/>
    <property type="evidence" value="ECO:0007669"/>
    <property type="project" value="UniProtKB-UniRule"/>
</dbReference>
<dbReference type="GO" id="GO:0006207">
    <property type="term" value="P:'de novo' pyrimidine nucleobase biosynthetic process"/>
    <property type="evidence" value="ECO:0007669"/>
    <property type="project" value="InterPro"/>
</dbReference>
<dbReference type="GO" id="GO:0044205">
    <property type="term" value="P:'de novo' UMP biosynthetic process"/>
    <property type="evidence" value="ECO:0007669"/>
    <property type="project" value="UniProtKB-UniRule"/>
</dbReference>
<dbReference type="GO" id="GO:0006520">
    <property type="term" value="P:amino acid metabolic process"/>
    <property type="evidence" value="ECO:0007669"/>
    <property type="project" value="InterPro"/>
</dbReference>
<dbReference type="FunFam" id="3.40.50.1370:FF:000001">
    <property type="entry name" value="Aspartate carbamoyltransferase"/>
    <property type="match status" value="1"/>
</dbReference>
<dbReference type="FunFam" id="3.40.50.1370:FF:000002">
    <property type="entry name" value="Aspartate carbamoyltransferase 2"/>
    <property type="match status" value="1"/>
</dbReference>
<dbReference type="Gene3D" id="3.40.50.1370">
    <property type="entry name" value="Aspartate/ornithine carbamoyltransferase"/>
    <property type="match status" value="2"/>
</dbReference>
<dbReference type="HAMAP" id="MF_00001">
    <property type="entry name" value="Asp_carb_tr"/>
    <property type="match status" value="1"/>
</dbReference>
<dbReference type="InterPro" id="IPR006132">
    <property type="entry name" value="Asp/Orn_carbamoyltranf_P-bd"/>
</dbReference>
<dbReference type="InterPro" id="IPR006130">
    <property type="entry name" value="Asp/Orn_carbamoylTrfase"/>
</dbReference>
<dbReference type="InterPro" id="IPR036901">
    <property type="entry name" value="Asp/Orn_carbamoylTrfase_sf"/>
</dbReference>
<dbReference type="InterPro" id="IPR002082">
    <property type="entry name" value="Asp_carbamoyltransf"/>
</dbReference>
<dbReference type="InterPro" id="IPR006131">
    <property type="entry name" value="Asp_carbamoyltransf_Asp/Orn-bd"/>
</dbReference>
<dbReference type="NCBIfam" id="TIGR00670">
    <property type="entry name" value="asp_carb_tr"/>
    <property type="match status" value="1"/>
</dbReference>
<dbReference type="NCBIfam" id="NF002032">
    <property type="entry name" value="PRK00856.1"/>
    <property type="match status" value="1"/>
</dbReference>
<dbReference type="PANTHER" id="PTHR45753:SF6">
    <property type="entry name" value="ASPARTATE CARBAMOYLTRANSFERASE"/>
    <property type="match status" value="1"/>
</dbReference>
<dbReference type="PANTHER" id="PTHR45753">
    <property type="entry name" value="ORNITHINE CARBAMOYLTRANSFERASE, MITOCHONDRIAL"/>
    <property type="match status" value="1"/>
</dbReference>
<dbReference type="Pfam" id="PF00185">
    <property type="entry name" value="OTCace"/>
    <property type="match status" value="1"/>
</dbReference>
<dbReference type="Pfam" id="PF02729">
    <property type="entry name" value="OTCace_N"/>
    <property type="match status" value="1"/>
</dbReference>
<dbReference type="PRINTS" id="PR00100">
    <property type="entry name" value="AOTCASE"/>
</dbReference>
<dbReference type="PRINTS" id="PR00101">
    <property type="entry name" value="ATCASE"/>
</dbReference>
<dbReference type="SUPFAM" id="SSF53671">
    <property type="entry name" value="Aspartate/ornithine carbamoyltransferase"/>
    <property type="match status" value="1"/>
</dbReference>
<dbReference type="PROSITE" id="PS00097">
    <property type="entry name" value="CARBAMOYLTRANSFERASE"/>
    <property type="match status" value="1"/>
</dbReference>
<accession>A8A803</accession>
<keyword id="KW-0665">Pyrimidine biosynthesis</keyword>
<keyword id="KW-0808">Transferase</keyword>
<gene>
    <name evidence="1" type="primary">pyrB</name>
    <name type="ordered locus">EcHS_A4501</name>
</gene>
<reference key="1">
    <citation type="journal article" date="2008" name="J. Bacteriol.">
        <title>The pangenome structure of Escherichia coli: comparative genomic analysis of E. coli commensal and pathogenic isolates.</title>
        <authorList>
            <person name="Rasko D.A."/>
            <person name="Rosovitz M.J."/>
            <person name="Myers G.S.A."/>
            <person name="Mongodin E.F."/>
            <person name="Fricke W.F."/>
            <person name="Gajer P."/>
            <person name="Crabtree J."/>
            <person name="Sebaihia M."/>
            <person name="Thomson N.R."/>
            <person name="Chaudhuri R."/>
            <person name="Henderson I.R."/>
            <person name="Sperandio V."/>
            <person name="Ravel J."/>
        </authorList>
    </citation>
    <scope>NUCLEOTIDE SEQUENCE [LARGE SCALE GENOMIC DNA]</scope>
    <source>
        <strain>HS</strain>
    </source>
</reference>
<feature type="chain" id="PRO_1000057011" description="Aspartate carbamoyltransferase catalytic subunit">
    <location>
        <begin position="1"/>
        <end position="311"/>
    </location>
</feature>
<feature type="binding site" evidence="1">
    <location>
        <position position="55"/>
    </location>
    <ligand>
        <name>carbamoyl phosphate</name>
        <dbReference type="ChEBI" id="CHEBI:58228"/>
    </ligand>
</feature>
<feature type="binding site" evidence="1">
    <location>
        <position position="56"/>
    </location>
    <ligand>
        <name>carbamoyl phosphate</name>
        <dbReference type="ChEBI" id="CHEBI:58228"/>
    </ligand>
</feature>
<feature type="binding site" evidence="1">
    <location>
        <position position="85"/>
    </location>
    <ligand>
        <name>L-aspartate</name>
        <dbReference type="ChEBI" id="CHEBI:29991"/>
    </ligand>
</feature>
<feature type="binding site" evidence="1">
    <location>
        <position position="106"/>
    </location>
    <ligand>
        <name>carbamoyl phosphate</name>
        <dbReference type="ChEBI" id="CHEBI:58228"/>
    </ligand>
</feature>
<feature type="binding site" evidence="1">
    <location>
        <position position="135"/>
    </location>
    <ligand>
        <name>carbamoyl phosphate</name>
        <dbReference type="ChEBI" id="CHEBI:58228"/>
    </ligand>
</feature>
<feature type="binding site" evidence="1">
    <location>
        <position position="138"/>
    </location>
    <ligand>
        <name>carbamoyl phosphate</name>
        <dbReference type="ChEBI" id="CHEBI:58228"/>
    </ligand>
</feature>
<feature type="binding site" evidence="1">
    <location>
        <position position="168"/>
    </location>
    <ligand>
        <name>L-aspartate</name>
        <dbReference type="ChEBI" id="CHEBI:29991"/>
    </ligand>
</feature>
<feature type="binding site" evidence="1">
    <location>
        <position position="230"/>
    </location>
    <ligand>
        <name>L-aspartate</name>
        <dbReference type="ChEBI" id="CHEBI:29991"/>
    </ligand>
</feature>
<feature type="binding site" evidence="1">
    <location>
        <position position="268"/>
    </location>
    <ligand>
        <name>carbamoyl phosphate</name>
        <dbReference type="ChEBI" id="CHEBI:58228"/>
    </ligand>
</feature>
<feature type="binding site" evidence="1">
    <location>
        <position position="269"/>
    </location>
    <ligand>
        <name>carbamoyl phosphate</name>
        <dbReference type="ChEBI" id="CHEBI:58228"/>
    </ligand>
</feature>
<name>PYRB_ECOHS</name>
<organism>
    <name type="scientific">Escherichia coli O9:H4 (strain HS)</name>
    <dbReference type="NCBI Taxonomy" id="331112"/>
    <lineage>
        <taxon>Bacteria</taxon>
        <taxon>Pseudomonadati</taxon>
        <taxon>Pseudomonadota</taxon>
        <taxon>Gammaproteobacteria</taxon>
        <taxon>Enterobacterales</taxon>
        <taxon>Enterobacteriaceae</taxon>
        <taxon>Escherichia</taxon>
    </lineage>
</organism>
<protein>
    <recommendedName>
        <fullName evidence="1">Aspartate carbamoyltransferase catalytic subunit</fullName>
        <ecNumber evidence="1">2.1.3.2</ecNumber>
    </recommendedName>
    <alternativeName>
        <fullName evidence="1">Aspartate transcarbamylase</fullName>
        <shortName evidence="1">ATCase</shortName>
    </alternativeName>
</protein>
<sequence length="311" mass="34427">MANPLYQKHIISINDLSRDDLNLVLATAAKLKANPQPELLKHKVIASCFFEASTRTRLSFETSMHRLGASVVGFSDSANTSLGKKGETLADTISVISTYVDAIVMRHPQEGAARLATEFSGNVPVLNAGDGSNQHPTQTLLDLFTIQETQGRLDNLHVAMVGDLKYGRTVHSLTQALAKFDGNRFYFIAPDALAMPQYILDMLDEKGIAWSLHSSIEEVMAEVDILYMTRVQKERLDPSEYANVKAQFVLRASDLHNAKANMKVLHPLPRVDEIATDVDKTPHAWYFQQAGNGIFARQALLALVLNRDLVL</sequence>